<reference key="1">
    <citation type="journal article" date="2003" name="Proc. Natl. Acad. Sci. U.S.A.">
        <title>Complete genome sequence of the Q-fever pathogen, Coxiella burnetii.</title>
        <authorList>
            <person name="Seshadri R."/>
            <person name="Paulsen I.T."/>
            <person name="Eisen J.A."/>
            <person name="Read T.D."/>
            <person name="Nelson K.E."/>
            <person name="Nelson W.C."/>
            <person name="Ward N.L."/>
            <person name="Tettelin H."/>
            <person name="Davidsen T.M."/>
            <person name="Beanan M.J."/>
            <person name="DeBoy R.T."/>
            <person name="Daugherty S.C."/>
            <person name="Brinkac L.M."/>
            <person name="Madupu R."/>
            <person name="Dodson R.J."/>
            <person name="Khouri H.M."/>
            <person name="Lee K.H."/>
            <person name="Carty H.A."/>
            <person name="Scanlan D."/>
            <person name="Heinzen R.A."/>
            <person name="Thompson H.A."/>
            <person name="Samuel J.E."/>
            <person name="Fraser C.M."/>
            <person name="Heidelberg J.F."/>
        </authorList>
    </citation>
    <scope>NUCLEOTIDE SEQUENCE [LARGE SCALE GENOMIC DNA]</scope>
    <source>
        <strain>RSA 493 / Nine Mile phase I</strain>
    </source>
</reference>
<reference key="2">
    <citation type="journal article" date="1994" name="J. Bacteriol.">
        <title>Cloning and characterization of an autonomous replication sequence from Coxiella burnetii.</title>
        <authorList>
            <person name="Suhan M."/>
            <person name="Chen S.Y."/>
            <person name="Thompson H.A."/>
            <person name="Hoover T.A."/>
            <person name="Hill A."/>
            <person name="Williams J.C."/>
        </authorList>
    </citation>
    <scope>NUCLEOTIDE SEQUENCE [GENOMIC DNA] OF 404-689</scope>
    <source>
        <strain>Nine Mile phase I / Bratislava</strain>
    </source>
</reference>
<name>SYGB_COXBU</name>
<gene>
    <name type="primary">glyS</name>
    <name type="ordered locus">CBU_1914</name>
</gene>
<evidence type="ECO:0000250" key="1"/>
<evidence type="ECO:0000305" key="2"/>
<feature type="chain" id="PRO_0000072898" description="Glycine--tRNA ligase beta subunit">
    <location>
        <begin position="1"/>
        <end position="689"/>
    </location>
</feature>
<feature type="sequence conflict" description="In Ref. 2." evidence="2" ref="2">
    <original>F</original>
    <variation>I</variation>
    <location>
        <position position="404"/>
    </location>
</feature>
<feature type="sequence conflict" description="In Ref. 2." evidence="2" ref="2">
    <original>S</original>
    <variation>A</variation>
    <location>
        <position position="438"/>
    </location>
</feature>
<proteinExistence type="inferred from homology"/>
<sequence length="689" mass="77974">MTTQDFLLEIGCEELPPRRLNQLSQALSQTIKSELEKADLSFENIHRYATPRRLAVLVNNLALQQPQRKIERQGPSVKAAFDKDQTPTLACFGFAQSCGVSTAQLKVKKTKKGEFIYCEIEQPGQNTLDLLPNIIQSALKQLPTPKAMRWGDHKEFFVRPVHWIILMLGKDLVPATLLGKMASCETRGHRFHHPKNILVTKPDDYQKLLLTHGMVIADFEKRREKIRDLIQKAASEKGEAIIDEGLLEEVTGMVEWPVILVGNFKAEFLKLPPEVLITTMKVHQRTFPIKNKNGDLLPYFIIVSNIESKNPKRVIVGNERVINARLADASFFYDNDLRTSLENRLPKLGDVIFQRQLGTLADKARRIEKLAAFIAKQINIDEQLAARAGLLSKCDLVSEMVYEFPTLQGIMGYYYAFHDKEPPLVAEAIKEHYLPRFSGDQLPRNLLSPCVAVADRIDTIIGIIGINKSPTGDKDPFALRRAALGILRILIEKELSLDLFALLNEAKNNYAVELPNVNVVNQSFDFIIERLRAWYLEKEVPASVFMAVLASHPDDPLDFDRRIKAVQHFQTLPEADALAAANKRVSNILKKQAAELKSKTIDHSLFDSDAEHLLADQLKERAELVNNLYKKADYTKALSELASLKEPIDIFFDKVMVMVDDKEKRENRLALLSSLQQLFSQIADISLLS</sequence>
<keyword id="KW-0030">Aminoacyl-tRNA synthetase</keyword>
<keyword id="KW-0067">ATP-binding</keyword>
<keyword id="KW-0963">Cytoplasm</keyword>
<keyword id="KW-0436">Ligase</keyword>
<keyword id="KW-0547">Nucleotide-binding</keyword>
<keyword id="KW-0648">Protein biosynthesis</keyword>
<keyword id="KW-1185">Reference proteome</keyword>
<organism>
    <name type="scientific">Coxiella burnetii (strain RSA 493 / Nine Mile phase I)</name>
    <dbReference type="NCBI Taxonomy" id="227377"/>
    <lineage>
        <taxon>Bacteria</taxon>
        <taxon>Pseudomonadati</taxon>
        <taxon>Pseudomonadota</taxon>
        <taxon>Gammaproteobacteria</taxon>
        <taxon>Legionellales</taxon>
        <taxon>Coxiellaceae</taxon>
        <taxon>Coxiella</taxon>
    </lineage>
</organism>
<protein>
    <recommendedName>
        <fullName>Glycine--tRNA ligase beta subunit</fullName>
        <ecNumber>6.1.1.14</ecNumber>
    </recommendedName>
    <alternativeName>
        <fullName>Glycyl-tRNA synthetase beta subunit</fullName>
        <shortName>GlyRS</shortName>
    </alternativeName>
</protein>
<dbReference type="EC" id="6.1.1.14"/>
<dbReference type="EMBL" id="AE016828">
    <property type="protein sequence ID" value="AAO91405.2"/>
    <property type="status" value="ALT_INIT"/>
    <property type="molecule type" value="Genomic_DNA"/>
</dbReference>
<dbReference type="EMBL" id="U10529">
    <property type="protein sequence ID" value="AAA56913.1"/>
    <property type="status" value="ALT_FRAME"/>
    <property type="molecule type" value="Genomic_DNA"/>
</dbReference>
<dbReference type="PIR" id="I40648">
    <property type="entry name" value="I40648"/>
</dbReference>
<dbReference type="RefSeq" id="NP_820891.2">
    <property type="nucleotide sequence ID" value="NC_002971.3"/>
</dbReference>
<dbReference type="RefSeq" id="WP_010958532.1">
    <property type="nucleotide sequence ID" value="NC_002971.4"/>
</dbReference>
<dbReference type="SMR" id="P45651"/>
<dbReference type="STRING" id="227377.CBU_1914"/>
<dbReference type="EnsemblBacteria" id="AAO91405">
    <property type="protein sequence ID" value="AAO91405"/>
    <property type="gene ID" value="CBU_1914"/>
</dbReference>
<dbReference type="GeneID" id="1209827"/>
<dbReference type="KEGG" id="cbu:CBU_1914"/>
<dbReference type="PATRIC" id="fig|227377.7.peg.1898"/>
<dbReference type="eggNOG" id="COG0751">
    <property type="taxonomic scope" value="Bacteria"/>
</dbReference>
<dbReference type="HOGENOM" id="CLU_007220_2_2_6"/>
<dbReference type="OrthoDB" id="9775440at2"/>
<dbReference type="Proteomes" id="UP000002671">
    <property type="component" value="Chromosome"/>
</dbReference>
<dbReference type="GO" id="GO:0005829">
    <property type="term" value="C:cytosol"/>
    <property type="evidence" value="ECO:0000318"/>
    <property type="project" value="GO_Central"/>
</dbReference>
<dbReference type="GO" id="GO:0004814">
    <property type="term" value="F:arginine-tRNA ligase activity"/>
    <property type="evidence" value="ECO:0007669"/>
    <property type="project" value="InterPro"/>
</dbReference>
<dbReference type="GO" id="GO:0005524">
    <property type="term" value="F:ATP binding"/>
    <property type="evidence" value="ECO:0007669"/>
    <property type="project" value="UniProtKB-UniRule"/>
</dbReference>
<dbReference type="GO" id="GO:0004820">
    <property type="term" value="F:glycine-tRNA ligase activity"/>
    <property type="evidence" value="ECO:0007669"/>
    <property type="project" value="UniProtKB-UniRule"/>
</dbReference>
<dbReference type="GO" id="GO:0006420">
    <property type="term" value="P:arginyl-tRNA aminoacylation"/>
    <property type="evidence" value="ECO:0007669"/>
    <property type="project" value="InterPro"/>
</dbReference>
<dbReference type="GO" id="GO:0006426">
    <property type="term" value="P:glycyl-tRNA aminoacylation"/>
    <property type="evidence" value="ECO:0007669"/>
    <property type="project" value="UniProtKB-UniRule"/>
</dbReference>
<dbReference type="Gene3D" id="1.10.730.10">
    <property type="entry name" value="Isoleucyl-tRNA Synthetase, Domain 1"/>
    <property type="match status" value="1"/>
</dbReference>
<dbReference type="HAMAP" id="MF_00255">
    <property type="entry name" value="Gly_tRNA_synth_beta"/>
    <property type="match status" value="1"/>
</dbReference>
<dbReference type="InterPro" id="IPR008909">
    <property type="entry name" value="DALR_anticod-bd"/>
</dbReference>
<dbReference type="InterPro" id="IPR015944">
    <property type="entry name" value="Gly-tRNA-synth_bsu"/>
</dbReference>
<dbReference type="InterPro" id="IPR006194">
    <property type="entry name" value="Gly-tRNA-synth_heterodimer"/>
</dbReference>
<dbReference type="NCBIfam" id="TIGR00211">
    <property type="entry name" value="glyS"/>
    <property type="match status" value="1"/>
</dbReference>
<dbReference type="PANTHER" id="PTHR30075:SF2">
    <property type="entry name" value="GLYCINE--TRNA LIGASE, CHLOROPLASTIC_MITOCHONDRIAL 2"/>
    <property type="match status" value="1"/>
</dbReference>
<dbReference type="PANTHER" id="PTHR30075">
    <property type="entry name" value="GLYCYL-TRNA SYNTHETASE"/>
    <property type="match status" value="1"/>
</dbReference>
<dbReference type="Pfam" id="PF05746">
    <property type="entry name" value="DALR_1"/>
    <property type="match status" value="1"/>
</dbReference>
<dbReference type="Pfam" id="PF02092">
    <property type="entry name" value="tRNA_synt_2f"/>
    <property type="match status" value="1"/>
</dbReference>
<dbReference type="PRINTS" id="PR01045">
    <property type="entry name" value="TRNASYNTHGB"/>
</dbReference>
<dbReference type="SUPFAM" id="SSF109604">
    <property type="entry name" value="HD-domain/PDEase-like"/>
    <property type="match status" value="1"/>
</dbReference>
<dbReference type="PROSITE" id="PS50861">
    <property type="entry name" value="AA_TRNA_LIGASE_II_GLYAB"/>
    <property type="match status" value="1"/>
</dbReference>
<comment type="catalytic activity">
    <reaction>
        <text>tRNA(Gly) + glycine + ATP = glycyl-tRNA(Gly) + AMP + diphosphate</text>
        <dbReference type="Rhea" id="RHEA:16013"/>
        <dbReference type="Rhea" id="RHEA-COMP:9664"/>
        <dbReference type="Rhea" id="RHEA-COMP:9683"/>
        <dbReference type="ChEBI" id="CHEBI:30616"/>
        <dbReference type="ChEBI" id="CHEBI:33019"/>
        <dbReference type="ChEBI" id="CHEBI:57305"/>
        <dbReference type="ChEBI" id="CHEBI:78442"/>
        <dbReference type="ChEBI" id="CHEBI:78522"/>
        <dbReference type="ChEBI" id="CHEBI:456215"/>
        <dbReference type="EC" id="6.1.1.14"/>
    </reaction>
</comment>
<comment type="subunit">
    <text>Tetramer of two alpha and two beta subunits.</text>
</comment>
<comment type="subcellular location">
    <subcellularLocation>
        <location evidence="1">Cytoplasm</location>
    </subcellularLocation>
</comment>
<comment type="similarity">
    <text evidence="2">Belongs to the class-II aminoacyl-tRNA synthetase family.</text>
</comment>
<comment type="sequence caution" evidence="2">
    <conflict type="frameshift">
        <sequence resource="EMBL-CDS" id="AAA56913"/>
    </conflict>
</comment>
<comment type="sequence caution" evidence="2">
    <conflict type="erroneous initiation">
        <sequence resource="EMBL-CDS" id="AAO91405"/>
    </conflict>
</comment>
<accession>P45651</accession>